<feature type="chain" id="PRO_0000196712" description="Phosphoenolpyruvate synthase regulatory protein">
    <location>
        <begin position="1"/>
        <end position="277"/>
    </location>
</feature>
<feature type="binding site" evidence="1">
    <location>
        <begin position="157"/>
        <end position="164"/>
    </location>
    <ligand>
        <name>ADP</name>
        <dbReference type="ChEBI" id="CHEBI:456216"/>
    </ligand>
</feature>
<gene>
    <name evidence="1" type="primary">ppsR</name>
    <name type="ordered locus">SF1527</name>
    <name type="ordered locus">S1645</name>
</gene>
<organism>
    <name type="scientific">Shigella flexneri</name>
    <dbReference type="NCBI Taxonomy" id="623"/>
    <lineage>
        <taxon>Bacteria</taxon>
        <taxon>Pseudomonadati</taxon>
        <taxon>Pseudomonadota</taxon>
        <taxon>Gammaproteobacteria</taxon>
        <taxon>Enterobacterales</taxon>
        <taxon>Enterobacteriaceae</taxon>
        <taxon>Shigella</taxon>
    </lineage>
</organism>
<reference key="1">
    <citation type="journal article" date="2002" name="Nucleic Acids Res.">
        <title>Genome sequence of Shigella flexneri 2a: insights into pathogenicity through comparison with genomes of Escherichia coli K12 and O157.</title>
        <authorList>
            <person name="Jin Q."/>
            <person name="Yuan Z."/>
            <person name="Xu J."/>
            <person name="Wang Y."/>
            <person name="Shen Y."/>
            <person name="Lu W."/>
            <person name="Wang J."/>
            <person name="Liu H."/>
            <person name="Yang J."/>
            <person name="Yang F."/>
            <person name="Zhang X."/>
            <person name="Zhang J."/>
            <person name="Yang G."/>
            <person name="Wu H."/>
            <person name="Qu D."/>
            <person name="Dong J."/>
            <person name="Sun L."/>
            <person name="Xue Y."/>
            <person name="Zhao A."/>
            <person name="Gao Y."/>
            <person name="Zhu J."/>
            <person name="Kan B."/>
            <person name="Ding K."/>
            <person name="Chen S."/>
            <person name="Cheng H."/>
            <person name="Yao Z."/>
            <person name="He B."/>
            <person name="Chen R."/>
            <person name="Ma D."/>
            <person name="Qiang B."/>
            <person name="Wen Y."/>
            <person name="Hou Y."/>
            <person name="Yu J."/>
        </authorList>
    </citation>
    <scope>NUCLEOTIDE SEQUENCE [LARGE SCALE GENOMIC DNA]</scope>
    <source>
        <strain>301 / Serotype 2a</strain>
    </source>
</reference>
<reference key="2">
    <citation type="journal article" date="2003" name="Infect. Immun.">
        <title>Complete genome sequence and comparative genomics of Shigella flexneri serotype 2a strain 2457T.</title>
        <authorList>
            <person name="Wei J."/>
            <person name="Goldberg M.B."/>
            <person name="Burland V."/>
            <person name="Venkatesan M.M."/>
            <person name="Deng W."/>
            <person name="Fournier G."/>
            <person name="Mayhew G.F."/>
            <person name="Plunkett G. III"/>
            <person name="Rose D.J."/>
            <person name="Darling A."/>
            <person name="Mau B."/>
            <person name="Perna N.T."/>
            <person name="Payne S.M."/>
            <person name="Runyen-Janecky L.J."/>
            <person name="Zhou S."/>
            <person name="Schwartz D.C."/>
            <person name="Blattner F.R."/>
        </authorList>
    </citation>
    <scope>NUCLEOTIDE SEQUENCE [LARGE SCALE GENOMIC DNA]</scope>
    <source>
        <strain>ATCC 700930 / 2457T / Serotype 2a</strain>
    </source>
</reference>
<proteinExistence type="inferred from homology"/>
<dbReference type="EC" id="2.7.11.33" evidence="1"/>
<dbReference type="EC" id="2.7.4.28" evidence="1"/>
<dbReference type="EMBL" id="AE005674">
    <property type="protein sequence ID" value="AAN43117.1"/>
    <property type="molecule type" value="Genomic_DNA"/>
</dbReference>
<dbReference type="EMBL" id="AE014073">
    <property type="protein sequence ID" value="AAP17008.1"/>
    <property type="molecule type" value="Genomic_DNA"/>
</dbReference>
<dbReference type="RefSeq" id="WP_000368046.1">
    <property type="nucleotide sequence ID" value="NZ_WPGW01000051.1"/>
</dbReference>
<dbReference type="SMR" id="P0A8A7"/>
<dbReference type="STRING" id="198214.SF1527"/>
<dbReference type="PaxDb" id="198214-SF1527"/>
<dbReference type="GeneID" id="93775866"/>
<dbReference type="KEGG" id="sfl:SF1527"/>
<dbReference type="KEGG" id="sfx:S1645"/>
<dbReference type="PATRIC" id="fig|198214.7.peg.1803"/>
<dbReference type="HOGENOM" id="CLU_046206_1_0_6"/>
<dbReference type="Proteomes" id="UP000001006">
    <property type="component" value="Chromosome"/>
</dbReference>
<dbReference type="Proteomes" id="UP000002673">
    <property type="component" value="Chromosome"/>
</dbReference>
<dbReference type="GO" id="GO:0043531">
    <property type="term" value="F:ADP binding"/>
    <property type="evidence" value="ECO:0007669"/>
    <property type="project" value="UniProtKB-UniRule"/>
</dbReference>
<dbReference type="GO" id="GO:0005524">
    <property type="term" value="F:ATP binding"/>
    <property type="evidence" value="ECO:0007669"/>
    <property type="project" value="InterPro"/>
</dbReference>
<dbReference type="GO" id="GO:0016776">
    <property type="term" value="F:phosphotransferase activity, phosphate group as acceptor"/>
    <property type="evidence" value="ECO:0007669"/>
    <property type="project" value="UniProtKB-UniRule"/>
</dbReference>
<dbReference type="GO" id="GO:0004674">
    <property type="term" value="F:protein serine/threonine kinase activity"/>
    <property type="evidence" value="ECO:0007669"/>
    <property type="project" value="UniProtKB-UniRule"/>
</dbReference>
<dbReference type="HAMAP" id="MF_01062">
    <property type="entry name" value="PSRP"/>
    <property type="match status" value="1"/>
</dbReference>
<dbReference type="InterPro" id="IPR005177">
    <property type="entry name" value="Kinase-pyrophosphorylase"/>
</dbReference>
<dbReference type="InterPro" id="IPR026530">
    <property type="entry name" value="PSRP"/>
</dbReference>
<dbReference type="NCBIfam" id="NF003742">
    <property type="entry name" value="PRK05339.1"/>
    <property type="match status" value="1"/>
</dbReference>
<dbReference type="PANTHER" id="PTHR31756">
    <property type="entry name" value="PYRUVATE, PHOSPHATE DIKINASE REGULATORY PROTEIN 1, CHLOROPLASTIC"/>
    <property type="match status" value="1"/>
</dbReference>
<dbReference type="PANTHER" id="PTHR31756:SF3">
    <property type="entry name" value="PYRUVATE, PHOSPHATE DIKINASE REGULATORY PROTEIN 1, CHLOROPLASTIC"/>
    <property type="match status" value="1"/>
</dbReference>
<dbReference type="Pfam" id="PF03618">
    <property type="entry name" value="Kinase-PPPase"/>
    <property type="match status" value="1"/>
</dbReference>
<sequence length="277" mass="31211">MDNAVDRHVFYISDGTAITAEVLGHAVMSQFPVTISSITLPFVENESRARAVKDQIDAIYHQTGVRPLVFYSIVLPEIRAIILQSEGFCQDIVQALVAPLQQEMKLDPTPIAHRTHGLNPNNLNKYDARIAAIDYTLAHDDGISLRNLDQAQVILLGVSRCGKTPTSLYLAMQFGIRAANYPFIADDMDNLVLPASLKPLQHKLFGLTIDPERLAAIREERRENSRYASLRQCRMEVAEVEALYRKNQIPWINSTNYSVEEIATKILDIMGLSRRMY</sequence>
<protein>
    <recommendedName>
        <fullName evidence="1">Phosphoenolpyruvate synthase regulatory protein</fullName>
        <shortName evidence="1">PEP synthase regulatory protein</shortName>
        <shortName evidence="1">PSRP</shortName>
        <ecNumber evidence="1">2.7.11.33</ecNumber>
        <ecNumber evidence="1">2.7.4.28</ecNumber>
    </recommendedName>
    <alternativeName>
        <fullName evidence="1">Pyruvate, water dikinase regulatory protein</fullName>
    </alternativeName>
</protein>
<evidence type="ECO:0000255" key="1">
    <source>
        <dbReference type="HAMAP-Rule" id="MF_01062"/>
    </source>
</evidence>
<comment type="function">
    <text evidence="1">Bifunctional serine/threonine kinase and phosphorylase involved in the regulation of the phosphoenolpyruvate synthase (PEPS) by catalyzing its phosphorylation/dephosphorylation.</text>
</comment>
<comment type="catalytic activity">
    <reaction evidence="1">
        <text>[pyruvate, water dikinase] + ADP = [pyruvate, water dikinase]-phosphate + AMP + H(+)</text>
        <dbReference type="Rhea" id="RHEA:46020"/>
        <dbReference type="Rhea" id="RHEA-COMP:11425"/>
        <dbReference type="Rhea" id="RHEA-COMP:11426"/>
        <dbReference type="ChEBI" id="CHEBI:15378"/>
        <dbReference type="ChEBI" id="CHEBI:43176"/>
        <dbReference type="ChEBI" id="CHEBI:68546"/>
        <dbReference type="ChEBI" id="CHEBI:456215"/>
        <dbReference type="ChEBI" id="CHEBI:456216"/>
        <dbReference type="EC" id="2.7.11.33"/>
    </reaction>
</comment>
<comment type="catalytic activity">
    <reaction evidence="1">
        <text>[pyruvate, water dikinase]-phosphate + phosphate + H(+) = [pyruvate, water dikinase] + diphosphate</text>
        <dbReference type="Rhea" id="RHEA:48580"/>
        <dbReference type="Rhea" id="RHEA-COMP:11425"/>
        <dbReference type="Rhea" id="RHEA-COMP:11426"/>
        <dbReference type="ChEBI" id="CHEBI:15378"/>
        <dbReference type="ChEBI" id="CHEBI:33019"/>
        <dbReference type="ChEBI" id="CHEBI:43176"/>
        <dbReference type="ChEBI" id="CHEBI:43474"/>
        <dbReference type="ChEBI" id="CHEBI:68546"/>
        <dbReference type="EC" id="2.7.4.28"/>
    </reaction>
</comment>
<comment type="similarity">
    <text evidence="1">Belongs to the pyruvate, phosphate/water dikinase regulatory protein family. PSRP subfamily.</text>
</comment>
<keyword id="KW-0418">Kinase</keyword>
<keyword id="KW-0547">Nucleotide-binding</keyword>
<keyword id="KW-1185">Reference proteome</keyword>
<keyword id="KW-0723">Serine/threonine-protein kinase</keyword>
<keyword id="KW-0808">Transferase</keyword>
<name>PSRP_SHIFL</name>
<accession>P0A8A7</accession>
<accession>P03822</accession>
<accession>P46137</accession>
<accession>P76203</accession>